<feature type="chain" id="PRO_1000055026" description="Small ribosomal subunit protein uS17">
    <location>
        <begin position="1"/>
        <end position="84"/>
    </location>
</feature>
<sequence length="84" mass="9704">MTDKIRTLQGRVVSDKMEKSIVVAIERFVKHPIYGKFIKRTTKLHVHDENNECGIGDVVEIRECRPLSKTKSWTLVRVVEKAVL</sequence>
<name>RS17_SHIF8</name>
<organism>
    <name type="scientific">Shigella flexneri serotype 5b (strain 8401)</name>
    <dbReference type="NCBI Taxonomy" id="373384"/>
    <lineage>
        <taxon>Bacteria</taxon>
        <taxon>Pseudomonadati</taxon>
        <taxon>Pseudomonadota</taxon>
        <taxon>Gammaproteobacteria</taxon>
        <taxon>Enterobacterales</taxon>
        <taxon>Enterobacteriaceae</taxon>
        <taxon>Shigella</taxon>
    </lineage>
</organism>
<protein>
    <recommendedName>
        <fullName evidence="1">Small ribosomal subunit protein uS17</fullName>
    </recommendedName>
    <alternativeName>
        <fullName evidence="2">30S ribosomal protein S17</fullName>
    </alternativeName>
</protein>
<evidence type="ECO:0000255" key="1">
    <source>
        <dbReference type="HAMAP-Rule" id="MF_01345"/>
    </source>
</evidence>
<evidence type="ECO:0000305" key="2"/>
<accession>Q0SZZ1</accession>
<proteinExistence type="inferred from homology"/>
<reference key="1">
    <citation type="journal article" date="2006" name="BMC Genomics">
        <title>Complete genome sequence of Shigella flexneri 5b and comparison with Shigella flexneri 2a.</title>
        <authorList>
            <person name="Nie H."/>
            <person name="Yang F."/>
            <person name="Zhang X."/>
            <person name="Yang J."/>
            <person name="Chen L."/>
            <person name="Wang J."/>
            <person name="Xiong Z."/>
            <person name="Peng J."/>
            <person name="Sun L."/>
            <person name="Dong J."/>
            <person name="Xue Y."/>
            <person name="Xu X."/>
            <person name="Chen S."/>
            <person name="Yao Z."/>
            <person name="Shen Y."/>
            <person name="Jin Q."/>
        </authorList>
    </citation>
    <scope>NUCLEOTIDE SEQUENCE [LARGE SCALE GENOMIC DNA]</scope>
    <source>
        <strain>8401</strain>
    </source>
</reference>
<comment type="function">
    <text evidence="1">One of the primary rRNA binding proteins, it binds specifically to the 5'-end of 16S ribosomal RNA.</text>
</comment>
<comment type="subunit">
    <text evidence="1">Part of the 30S ribosomal subunit.</text>
</comment>
<comment type="similarity">
    <text evidence="1">Belongs to the universal ribosomal protein uS17 family.</text>
</comment>
<dbReference type="EMBL" id="CP000266">
    <property type="protein sequence ID" value="ABF05374.1"/>
    <property type="molecule type" value="Genomic_DNA"/>
</dbReference>
<dbReference type="RefSeq" id="WP_000130100.1">
    <property type="nucleotide sequence ID" value="NC_008258.1"/>
</dbReference>
<dbReference type="SMR" id="Q0SZZ1"/>
<dbReference type="GeneID" id="93778676"/>
<dbReference type="KEGG" id="sfv:SFV_3331"/>
<dbReference type="HOGENOM" id="CLU_073626_1_1_6"/>
<dbReference type="Proteomes" id="UP000000659">
    <property type="component" value="Chromosome"/>
</dbReference>
<dbReference type="GO" id="GO:0022627">
    <property type="term" value="C:cytosolic small ribosomal subunit"/>
    <property type="evidence" value="ECO:0007669"/>
    <property type="project" value="TreeGrafter"/>
</dbReference>
<dbReference type="GO" id="GO:0019843">
    <property type="term" value="F:rRNA binding"/>
    <property type="evidence" value="ECO:0007669"/>
    <property type="project" value="UniProtKB-UniRule"/>
</dbReference>
<dbReference type="GO" id="GO:0003735">
    <property type="term" value="F:structural constituent of ribosome"/>
    <property type="evidence" value="ECO:0007669"/>
    <property type="project" value="InterPro"/>
</dbReference>
<dbReference type="GO" id="GO:0006412">
    <property type="term" value="P:translation"/>
    <property type="evidence" value="ECO:0007669"/>
    <property type="project" value="UniProtKB-UniRule"/>
</dbReference>
<dbReference type="CDD" id="cd00364">
    <property type="entry name" value="Ribosomal_uS17"/>
    <property type="match status" value="1"/>
</dbReference>
<dbReference type="FunFam" id="2.40.50.140:FF:000014">
    <property type="entry name" value="30S ribosomal protein S17"/>
    <property type="match status" value="1"/>
</dbReference>
<dbReference type="Gene3D" id="2.40.50.140">
    <property type="entry name" value="Nucleic acid-binding proteins"/>
    <property type="match status" value="1"/>
</dbReference>
<dbReference type="HAMAP" id="MF_01345_B">
    <property type="entry name" value="Ribosomal_uS17_B"/>
    <property type="match status" value="1"/>
</dbReference>
<dbReference type="InterPro" id="IPR012340">
    <property type="entry name" value="NA-bd_OB-fold"/>
</dbReference>
<dbReference type="InterPro" id="IPR000266">
    <property type="entry name" value="Ribosomal_uS17"/>
</dbReference>
<dbReference type="InterPro" id="IPR019984">
    <property type="entry name" value="Ribosomal_uS17_bact/chlr"/>
</dbReference>
<dbReference type="InterPro" id="IPR019979">
    <property type="entry name" value="Ribosomal_uS17_CS"/>
</dbReference>
<dbReference type="NCBIfam" id="NF004123">
    <property type="entry name" value="PRK05610.1"/>
    <property type="match status" value="1"/>
</dbReference>
<dbReference type="NCBIfam" id="TIGR03635">
    <property type="entry name" value="uS17_bact"/>
    <property type="match status" value="1"/>
</dbReference>
<dbReference type="PANTHER" id="PTHR10744">
    <property type="entry name" value="40S RIBOSOMAL PROTEIN S11 FAMILY MEMBER"/>
    <property type="match status" value="1"/>
</dbReference>
<dbReference type="PANTHER" id="PTHR10744:SF1">
    <property type="entry name" value="SMALL RIBOSOMAL SUBUNIT PROTEIN US17M"/>
    <property type="match status" value="1"/>
</dbReference>
<dbReference type="Pfam" id="PF00366">
    <property type="entry name" value="Ribosomal_S17"/>
    <property type="match status" value="1"/>
</dbReference>
<dbReference type="PRINTS" id="PR00973">
    <property type="entry name" value="RIBOSOMALS17"/>
</dbReference>
<dbReference type="SUPFAM" id="SSF50249">
    <property type="entry name" value="Nucleic acid-binding proteins"/>
    <property type="match status" value="1"/>
</dbReference>
<dbReference type="PROSITE" id="PS00056">
    <property type="entry name" value="RIBOSOMAL_S17"/>
    <property type="match status" value="1"/>
</dbReference>
<keyword id="KW-0687">Ribonucleoprotein</keyword>
<keyword id="KW-0689">Ribosomal protein</keyword>
<keyword id="KW-0694">RNA-binding</keyword>
<keyword id="KW-0699">rRNA-binding</keyword>
<gene>
    <name evidence="1" type="primary">rpsQ</name>
    <name type="ordered locus">SFV_3331</name>
</gene>